<reference key="1">
    <citation type="journal article" date="2018" name="Fungal Genet. Biol.">
        <title>Multi-genome analysis identifies functional and phylogenetic diversity of basidiomycete adenylate-forming reductases.</title>
        <authorList>
            <person name="Brandenburger E."/>
            <person name="Braga D."/>
            <person name="Kombrink A."/>
            <person name="Lackner G."/>
            <person name="Gressler J."/>
            <person name="Kuenzler M."/>
            <person name="Hoffmeister D."/>
        </authorList>
    </citation>
    <scope>NUCLEOTIDE SEQUENCE [MRNA]</scope>
    <scope>FUNCTION</scope>
    <scope>CATALYTIC ACTIVITY</scope>
    <source>
        <strain>AmutBmut</strain>
    </source>
</reference>
<reference key="2">
    <citation type="journal article" date="2010" name="Proc. Natl. Acad. Sci. U.S.A.">
        <title>Insights into evolution of multicellular fungi from the assembled chromosomes of the mushroom Coprinopsis cinerea (Coprinus cinereus).</title>
        <authorList>
            <person name="Stajich J.E."/>
            <person name="Wilke S.K."/>
            <person name="Ahren D."/>
            <person name="Au C.H."/>
            <person name="Birren B.W."/>
            <person name="Borodovsky M."/>
            <person name="Burns C."/>
            <person name="Canbaeck B."/>
            <person name="Casselton L.A."/>
            <person name="Cheng C.K."/>
            <person name="Deng J."/>
            <person name="Dietrich F.S."/>
            <person name="Fargo D.C."/>
            <person name="Farman M.L."/>
            <person name="Gathman A.C."/>
            <person name="Goldberg J."/>
            <person name="Guigo R."/>
            <person name="Hoegger P.J."/>
            <person name="Hooker J.B."/>
            <person name="Huggins A."/>
            <person name="James T.Y."/>
            <person name="Kamada T."/>
            <person name="Kilaru S."/>
            <person name="Kodira C."/>
            <person name="Kuees U."/>
            <person name="Kupfer D."/>
            <person name="Kwan H.S."/>
            <person name="Lomsadze A."/>
            <person name="Li W."/>
            <person name="Lilly W.W."/>
            <person name="Ma L.-J."/>
            <person name="Mackey A.J."/>
            <person name="Manning G."/>
            <person name="Martin F."/>
            <person name="Muraguchi H."/>
            <person name="Natvig D.O."/>
            <person name="Palmerini H."/>
            <person name="Ramesh M.A."/>
            <person name="Rehmeyer C.J."/>
            <person name="Roe B.A."/>
            <person name="Shenoy N."/>
            <person name="Stanke M."/>
            <person name="Ter-Hovhannisyan V."/>
            <person name="Tunlid A."/>
            <person name="Velagapudi R."/>
            <person name="Vision T.J."/>
            <person name="Zeng Q."/>
            <person name="Zolan M.E."/>
            <person name="Pukkila P.J."/>
        </authorList>
    </citation>
    <scope>NUCLEOTIDE SEQUENCE [LARGE SCALE GENOMIC DNA]</scope>
    <source>
        <strain>Okayama-7 / 130 / ATCC MYA-4618 / FGSC 9003</strain>
    </source>
</reference>
<evidence type="ECO:0000250" key="1">
    <source>
        <dbReference type="UniProtKB" id="Q6RKB1"/>
    </source>
</evidence>
<evidence type="ECO:0000255" key="2"/>
<evidence type="ECO:0000269" key="3">
    <source>
    </source>
</evidence>
<evidence type="ECO:0000303" key="4">
    <source>
    </source>
</evidence>
<evidence type="ECO:0000305" key="5"/>
<evidence type="ECO:0000305" key="6">
    <source>
    </source>
</evidence>
<gene>
    <name type="ORF">CC1G_03009</name>
</gene>
<organism>
    <name type="scientific">Coprinopsis cinerea (strain Okayama-7 / 130 / ATCC MYA-4618 / FGSC 9003)</name>
    <name type="common">Inky cap fungus</name>
    <name type="synonym">Hormographiella aspergillata</name>
    <dbReference type="NCBI Taxonomy" id="240176"/>
    <lineage>
        <taxon>Eukaryota</taxon>
        <taxon>Fungi</taxon>
        <taxon>Dikarya</taxon>
        <taxon>Basidiomycota</taxon>
        <taxon>Agaricomycotina</taxon>
        <taxon>Agaricomycetes</taxon>
        <taxon>Agaricomycetidae</taxon>
        <taxon>Agaricales</taxon>
        <taxon>Agaricineae</taxon>
        <taxon>Psathyrellaceae</taxon>
        <taxon>Coprinopsis</taxon>
    </lineage>
</organism>
<protein>
    <recommendedName>
        <fullName evidence="4">Adenylate-forming reductase 03009</fullName>
        <ecNumber evidence="3">1.2.1.-</ecNumber>
    </recommendedName>
    <alternativeName>
        <fullName evidence="4">Alanine/valine/serine reductase</fullName>
    </alternativeName>
    <alternativeName>
        <fullName evidence="4">Nonribosomal peptide synthase 12-like enzyme</fullName>
        <shortName evidence="4">NRPS-like</shortName>
    </alternativeName>
</protein>
<name>N3009_COPC7</name>
<accession>A8NS27</accession>
<accession>A0A1B1ZGC6</accession>
<keyword id="KW-0067">ATP-binding</keyword>
<keyword id="KW-0521">NADP</keyword>
<keyword id="KW-0547">Nucleotide-binding</keyword>
<keyword id="KW-0560">Oxidoreductase</keyword>
<keyword id="KW-1185">Reference proteome</keyword>
<comment type="function">
    <text evidence="3">Adenylate-forming reductase, a natural product biosynthesis enzyme that resembles non-ribosomal peptide synthetases, yet serves to modify one substrate, rather than to condense two or more building blocks. The A-domain preferentially accepts L-serine, L-alanine and L-valine as substrates. The natural product of the enzyme is not yet known.</text>
</comment>
<comment type="domain">
    <text evidence="6">Contains three distinct domains: an adenylation (A) domain that activates the substrate amino acid which is subsequently covalently linked as a thioester (aminoacyl-S-PCP) to the 4'-phosphopantetheine prosthetic group of the second domain, the peptidyl carrier protein (PCP) domain, as well as a reductase (R) domain of the ferredoxin-NADP reductase (FNR) type.</text>
</comment>
<comment type="similarity">
    <text evidence="5">Belongs to the adenylate-forming reductase family.</text>
</comment>
<comment type="sequence caution" evidence="5">
    <conflict type="erroneous initiation">
        <sequence resource="EMBL-CDS" id="EAU85986"/>
    </conflict>
    <text>Extended N-terminus.</text>
</comment>
<proteinExistence type="evidence at protein level"/>
<sequence length="1025" mass="112552">MASSDLLSHLSATDRALFWKYGVGAEVSVPFQCVHHAFEFHAKSNPQLTAVDELGTTLSYGELDRRANCLASRLRSVGVVQGSRVCMLVERAVTLPVAVLGILKAGAAYIPLDGNIVSDSTLKHALVDSGSTVALTLRKFEHRLEGAPVPVVFLDDAICPSYNPSHCVKPRDTTTSKDSVYIIYTSGTTGTPKGVHVTHGNVTNLICIEPGQLGMKPGVRVSQMLNISFDFAAWEILGSLANGATLCPRGKTSKDWKAVMRSVDILFSTPSMLAPHNPVDYPNVKTVVVAGEACPKALADTWGARVKFWNACGPTEVTIANTMQLHIPGDIVTIGGPTPNNTAYVLDENMRPVPIGQTGVMWGGGAGITKGYLNLPDKTSERYVRDPFANDGSMMFNTGDLGKWVSNGTLQHLGRIDNQVKIKGFRVELDGVATAMETCAGVTGATALLIDGELWGFVKPSNISPEDIKAAAHKVQPYYAVPSKILTMDHFPETANGKTDKRVLQQMAIESKEEEAKLKEEKAAIPENVAWISLPPTVVTAPKTELTIPHRPSDHSLGSTNTKISAQVKEADSSASSTSELEKQEYIWSGYQDDDHPEKTQGRLVRNLRHQIFSLYRRLFSVVFIVNAAILIWICVKKEYDANRIGGIVIANVFIGVLMRQELVINTFFLIFTSIPSSWPLFIRRTAARVYHIGGIHSGAGVSSLLWLCLFTAQATKEMINGGKTSVRTVAITYVILAELLGIVIFAYPALRKRLHDTFENTHRFLGWSALALVWVQFMFLTIDYLPEGQMLGQTLVKTPQFWLVIILTCSVIWPWFRLRKVDVKPEVLSNHAVRLWFDYVTPPAGTFMRVSDAPLKEWHGFAAIPIPGRTGYSLVVSRAGDWTSKHIANPPTKLWVKGVPTYGVLKLVPMFRRMVIVATGSGIGPCAPAIFEKRIPMRVLWTAPNVRETFGDKLVDSILEANPEAVIYDTRKHGKPDMVKLTLRLVKEFNAEAVAIISNQPLTEKVVYGMMSRGIPAFGAIWDS</sequence>
<feature type="chain" id="PRO_0000442640" description="Adenylate-forming reductase 03009">
    <location>
        <begin position="1"/>
        <end position="1025"/>
    </location>
</feature>
<feature type="region of interest" description="Adenylation (A) domain" evidence="2 6">
    <location>
        <begin position="38"/>
        <end position="422"/>
    </location>
</feature>
<feature type="region of interest" description="Thiolation and peptide carrier (T) domain" evidence="6">
    <location>
        <begin position="556"/>
        <end position="638"/>
    </location>
</feature>
<feature type="region of interest" description="Thioester reductase (TR) domain" evidence="6">
    <location>
        <begin position="682"/>
        <end position="900"/>
    </location>
</feature>
<feature type="binding site" evidence="1">
    <location>
        <begin position="332"/>
        <end position="333"/>
    </location>
    <ligand>
        <name>AMP</name>
        <dbReference type="ChEBI" id="CHEBI:456215"/>
    </ligand>
</feature>
<feature type="binding site" evidence="1">
    <location>
        <begin position="412"/>
        <end position="415"/>
    </location>
    <ligand>
        <name>AMP</name>
        <dbReference type="ChEBI" id="CHEBI:456215"/>
    </ligand>
</feature>
<feature type="binding site" evidence="1">
    <location>
        <begin position="685"/>
        <end position="688"/>
    </location>
    <ligand>
        <name>NADP(+)</name>
        <dbReference type="ChEBI" id="CHEBI:58349"/>
    </ligand>
</feature>
<feature type="binding site" evidence="1">
    <location>
        <begin position="769"/>
        <end position="771"/>
    </location>
    <ligand>
        <name>NADP(+)</name>
        <dbReference type="ChEBI" id="CHEBI:58349"/>
    </ligand>
</feature>
<feature type="binding site" evidence="1">
    <location>
        <position position="840"/>
    </location>
    <ligand>
        <name>NADP(+)</name>
        <dbReference type="ChEBI" id="CHEBI:58349"/>
    </ligand>
</feature>
<dbReference type="EC" id="1.2.1.-" evidence="3"/>
<dbReference type="EMBL" id="KX118593">
    <property type="protein sequence ID" value="ANX99777.1"/>
    <property type="molecule type" value="mRNA"/>
</dbReference>
<dbReference type="EMBL" id="AACS02000008">
    <property type="protein sequence ID" value="EAU85986.2"/>
    <property type="status" value="ALT_INIT"/>
    <property type="molecule type" value="Genomic_DNA"/>
</dbReference>
<dbReference type="RefSeq" id="XP_001835921.2">
    <property type="nucleotide sequence ID" value="XM_001835869.2"/>
</dbReference>
<dbReference type="SMR" id="A8NS27"/>
<dbReference type="STRING" id="240176.A8NS27"/>
<dbReference type="GeneID" id="6012458"/>
<dbReference type="KEGG" id="cci:CC1G_03009"/>
<dbReference type="eggNOG" id="KOG1178">
    <property type="taxonomic scope" value="Eukaryota"/>
</dbReference>
<dbReference type="HOGENOM" id="CLU_005562_2_0_1"/>
<dbReference type="InParanoid" id="A8NS27"/>
<dbReference type="OrthoDB" id="408177at2759"/>
<dbReference type="Proteomes" id="UP000001861">
    <property type="component" value="Unassembled WGS sequence"/>
</dbReference>
<dbReference type="GO" id="GO:0005524">
    <property type="term" value="F:ATP binding"/>
    <property type="evidence" value="ECO:0007669"/>
    <property type="project" value="UniProtKB-KW"/>
</dbReference>
<dbReference type="GO" id="GO:0016491">
    <property type="term" value="F:oxidoreductase activity"/>
    <property type="evidence" value="ECO:0007669"/>
    <property type="project" value="UniProtKB-KW"/>
</dbReference>
<dbReference type="Gene3D" id="3.30.300.30">
    <property type="match status" value="1"/>
</dbReference>
<dbReference type="Gene3D" id="3.40.50.12780">
    <property type="entry name" value="N-terminal domain of ligase-like"/>
    <property type="match status" value="1"/>
</dbReference>
<dbReference type="InterPro" id="IPR010071">
    <property type="entry name" value="AA_adenyl_dom"/>
</dbReference>
<dbReference type="InterPro" id="IPR052979">
    <property type="entry name" value="Adenylate-forming_domain"/>
</dbReference>
<dbReference type="InterPro" id="IPR045851">
    <property type="entry name" value="AMP-bd_C_sf"/>
</dbReference>
<dbReference type="InterPro" id="IPR020845">
    <property type="entry name" value="AMP-binding_CS"/>
</dbReference>
<dbReference type="InterPro" id="IPR000873">
    <property type="entry name" value="AMP-dep_synth/lig_dom"/>
</dbReference>
<dbReference type="InterPro" id="IPR042099">
    <property type="entry name" value="ANL_N_sf"/>
</dbReference>
<dbReference type="NCBIfam" id="TIGR01733">
    <property type="entry name" value="AA-adenyl-dom"/>
    <property type="match status" value="1"/>
</dbReference>
<dbReference type="PANTHER" id="PTHR33927:SF5">
    <property type="entry name" value="ENZYME, PUTATIVE (AFU_ORTHOLOGUE AFUA_8G01222)-RELATED"/>
    <property type="match status" value="1"/>
</dbReference>
<dbReference type="PANTHER" id="PTHR33927">
    <property type="entry name" value="TRANSMEMBRANE PROTEIN"/>
    <property type="match status" value="1"/>
</dbReference>
<dbReference type="Pfam" id="PF00501">
    <property type="entry name" value="AMP-binding"/>
    <property type="match status" value="1"/>
</dbReference>
<dbReference type="SUPFAM" id="SSF56801">
    <property type="entry name" value="Acetyl-CoA synthetase-like"/>
    <property type="match status" value="1"/>
</dbReference>
<dbReference type="PROSITE" id="PS00455">
    <property type="entry name" value="AMP_BINDING"/>
    <property type="match status" value="1"/>
</dbReference>